<keyword id="KW-0002">3D-structure</keyword>
<keyword id="KW-0143">Chaperone</keyword>
<keyword id="KW-0963">Cytoplasm</keyword>
<keyword id="KW-1185">Reference proteome</keyword>
<keyword id="KW-0346">Stress response</keyword>
<proteinExistence type="evidence at protein level"/>
<name>GRPE_GEOKA</name>
<organism>
    <name type="scientific">Geobacillus kaustophilus (strain HTA426)</name>
    <dbReference type="NCBI Taxonomy" id="235909"/>
    <lineage>
        <taxon>Bacteria</taxon>
        <taxon>Bacillati</taxon>
        <taxon>Bacillota</taxon>
        <taxon>Bacilli</taxon>
        <taxon>Bacillales</taxon>
        <taxon>Anoxybacillaceae</taxon>
        <taxon>Geobacillus</taxon>
        <taxon>Geobacillus thermoleovorans group</taxon>
    </lineage>
</organism>
<feature type="chain" id="PRO_1000053586" description="Protein GrpE">
    <location>
        <begin position="1"/>
        <end position="213"/>
    </location>
</feature>
<feature type="region of interest" description="Disordered" evidence="2">
    <location>
        <begin position="1"/>
        <end position="61"/>
    </location>
</feature>
<feature type="compositionally biased region" description="Acidic residues" evidence="2">
    <location>
        <begin position="13"/>
        <end position="35"/>
    </location>
</feature>
<gene>
    <name evidence="1" type="primary">grpE</name>
    <name type="ordered locus">GK2505</name>
</gene>
<accession>Q5KWZ6</accession>
<evidence type="ECO:0000255" key="1">
    <source>
        <dbReference type="HAMAP-Rule" id="MF_01151"/>
    </source>
</evidence>
<evidence type="ECO:0000256" key="2">
    <source>
        <dbReference type="SAM" id="MobiDB-lite"/>
    </source>
</evidence>
<reference key="1">
    <citation type="journal article" date="2004" name="Nucleic Acids Res.">
        <title>Thermoadaptation trait revealed by the genome sequence of thermophilic Geobacillus kaustophilus.</title>
        <authorList>
            <person name="Takami H."/>
            <person name="Takaki Y."/>
            <person name="Chee G.-J."/>
            <person name="Nishi S."/>
            <person name="Shimamura S."/>
            <person name="Suzuki H."/>
            <person name="Matsui S."/>
            <person name="Uchiyama I."/>
        </authorList>
    </citation>
    <scope>NUCLEOTIDE SEQUENCE [LARGE SCALE GENOMIC DNA]</scope>
    <source>
        <strain>HTA426</strain>
    </source>
</reference>
<dbReference type="EMBL" id="BA000043">
    <property type="protein sequence ID" value="BAD76790.1"/>
    <property type="molecule type" value="Genomic_DNA"/>
</dbReference>
<dbReference type="RefSeq" id="WP_011231984.1">
    <property type="nucleotide sequence ID" value="NC_006510.1"/>
</dbReference>
<dbReference type="PDB" id="4ANI">
    <property type="method" value="X-ray"/>
    <property type="resolution" value="4.09 A"/>
    <property type="chains" value="A/B/E/F=1-213"/>
</dbReference>
<dbReference type="PDBsum" id="4ANI"/>
<dbReference type="SMR" id="Q5KWZ6"/>
<dbReference type="STRING" id="235909.GK2505"/>
<dbReference type="KEGG" id="gka:GK2505"/>
<dbReference type="eggNOG" id="COG0576">
    <property type="taxonomic scope" value="Bacteria"/>
</dbReference>
<dbReference type="HOGENOM" id="CLU_057217_5_2_9"/>
<dbReference type="EvolutionaryTrace" id="Q5KWZ6"/>
<dbReference type="Proteomes" id="UP000001172">
    <property type="component" value="Chromosome"/>
</dbReference>
<dbReference type="GO" id="GO:0005737">
    <property type="term" value="C:cytoplasm"/>
    <property type="evidence" value="ECO:0007669"/>
    <property type="project" value="UniProtKB-SubCell"/>
</dbReference>
<dbReference type="GO" id="GO:0000774">
    <property type="term" value="F:adenyl-nucleotide exchange factor activity"/>
    <property type="evidence" value="ECO:0007669"/>
    <property type="project" value="InterPro"/>
</dbReference>
<dbReference type="GO" id="GO:0042803">
    <property type="term" value="F:protein homodimerization activity"/>
    <property type="evidence" value="ECO:0007669"/>
    <property type="project" value="InterPro"/>
</dbReference>
<dbReference type="GO" id="GO:0051087">
    <property type="term" value="F:protein-folding chaperone binding"/>
    <property type="evidence" value="ECO:0007669"/>
    <property type="project" value="InterPro"/>
</dbReference>
<dbReference type="GO" id="GO:0051082">
    <property type="term" value="F:unfolded protein binding"/>
    <property type="evidence" value="ECO:0007669"/>
    <property type="project" value="TreeGrafter"/>
</dbReference>
<dbReference type="GO" id="GO:0006457">
    <property type="term" value="P:protein folding"/>
    <property type="evidence" value="ECO:0007669"/>
    <property type="project" value="InterPro"/>
</dbReference>
<dbReference type="CDD" id="cd00446">
    <property type="entry name" value="GrpE"/>
    <property type="match status" value="1"/>
</dbReference>
<dbReference type="FunFam" id="2.30.22.10:FF:000001">
    <property type="entry name" value="Protein GrpE"/>
    <property type="match status" value="1"/>
</dbReference>
<dbReference type="FunFam" id="3.90.20.20:FF:000002">
    <property type="entry name" value="Protein GrpE"/>
    <property type="match status" value="1"/>
</dbReference>
<dbReference type="Gene3D" id="3.90.20.20">
    <property type="match status" value="1"/>
</dbReference>
<dbReference type="Gene3D" id="2.30.22.10">
    <property type="entry name" value="Head domain of nucleotide exchange factor GrpE"/>
    <property type="match status" value="1"/>
</dbReference>
<dbReference type="HAMAP" id="MF_01151">
    <property type="entry name" value="GrpE"/>
    <property type="match status" value="1"/>
</dbReference>
<dbReference type="InterPro" id="IPR000740">
    <property type="entry name" value="GrpE"/>
</dbReference>
<dbReference type="InterPro" id="IPR013805">
    <property type="entry name" value="GrpE_coiled_coil"/>
</dbReference>
<dbReference type="InterPro" id="IPR009012">
    <property type="entry name" value="GrpE_head"/>
</dbReference>
<dbReference type="NCBIfam" id="NF010738">
    <property type="entry name" value="PRK14140.1"/>
    <property type="match status" value="1"/>
</dbReference>
<dbReference type="NCBIfam" id="NF010748">
    <property type="entry name" value="PRK14150.1"/>
    <property type="match status" value="1"/>
</dbReference>
<dbReference type="PANTHER" id="PTHR21237">
    <property type="entry name" value="GRPE PROTEIN"/>
    <property type="match status" value="1"/>
</dbReference>
<dbReference type="PANTHER" id="PTHR21237:SF23">
    <property type="entry name" value="GRPE PROTEIN HOMOLOG, MITOCHONDRIAL"/>
    <property type="match status" value="1"/>
</dbReference>
<dbReference type="Pfam" id="PF01025">
    <property type="entry name" value="GrpE"/>
    <property type="match status" value="1"/>
</dbReference>
<dbReference type="PRINTS" id="PR00773">
    <property type="entry name" value="GRPEPROTEIN"/>
</dbReference>
<dbReference type="SUPFAM" id="SSF58014">
    <property type="entry name" value="Coiled-coil domain of nucleotide exchange factor GrpE"/>
    <property type="match status" value="1"/>
</dbReference>
<dbReference type="SUPFAM" id="SSF51064">
    <property type="entry name" value="Head domain of nucleotide exchange factor GrpE"/>
    <property type="match status" value="1"/>
</dbReference>
<dbReference type="PROSITE" id="PS01071">
    <property type="entry name" value="GRPE"/>
    <property type="match status" value="1"/>
</dbReference>
<sequence length="213" mass="24044">MEQGEKQVMEQATYDEPEREQPIEEEAAPQPEEESGGVPLEEAGGEEAAEPAEKAPTAEELAAAKAQIAELEAKLSEMEHRYLRLYADFENFRRRTRQEMEAAEKYRAQSLASDLLPVLDNFERALKIETDNEQAKSILQGMEMVYRSLVDALKKEGVEAIEAVGKPFDPYLHQAVMQAEAEGYEPNTVVEELQKGYKLKDRVLRPAMVKVSQ</sequence>
<protein>
    <recommendedName>
        <fullName evidence="1">Protein GrpE</fullName>
    </recommendedName>
    <alternativeName>
        <fullName evidence="1">HSP-70 cofactor</fullName>
    </alternativeName>
</protein>
<comment type="function">
    <text evidence="1">Participates actively in the response to hyperosmotic and heat shock by preventing the aggregation of stress-denatured proteins, in association with DnaK and GrpE. It is the nucleotide exchange factor for DnaK and may function as a thermosensor. Unfolded proteins bind initially to DnaJ; upon interaction with the DnaJ-bound protein, DnaK hydrolyzes its bound ATP, resulting in the formation of a stable complex. GrpE releases ADP from DnaK; ATP binding to DnaK triggers the release of the substrate protein, thus completing the reaction cycle. Several rounds of ATP-dependent interactions between DnaJ, DnaK and GrpE are required for fully efficient folding.</text>
</comment>
<comment type="subunit">
    <text evidence="1">Homodimer.</text>
</comment>
<comment type="subcellular location">
    <subcellularLocation>
        <location evidence="1">Cytoplasm</location>
    </subcellularLocation>
</comment>
<comment type="similarity">
    <text evidence="1">Belongs to the GrpE family.</text>
</comment>